<proteinExistence type="evidence at transcript level"/>
<feature type="chain" id="PRO_0000099236" description="25 kDa core protein OPG138" evidence="1">
    <location>
        <begin position="1"/>
        <end position="192"/>
    </location>
</feature>
<feature type="chain" id="PRO_0000413914" description="17 kDa core protein OPG138" evidence="1">
    <location>
        <begin position="1"/>
        <end position="56"/>
    </location>
</feature>
<feature type="region of interest" description="Disordered" evidence="2">
    <location>
        <begin position="69"/>
        <end position="105"/>
    </location>
</feature>
<feature type="region of interest" description="Disordered" evidence="2">
    <location>
        <begin position="152"/>
        <end position="178"/>
    </location>
</feature>
<feature type="compositionally biased region" description="Low complexity" evidence="2">
    <location>
        <begin position="69"/>
        <end position="91"/>
    </location>
</feature>
<feature type="compositionally biased region" description="Basic residues" evidence="2">
    <location>
        <begin position="154"/>
        <end position="164"/>
    </location>
</feature>
<feature type="site" description="Cleavage; by OPG083 protease" evidence="1">
    <location>
        <begin position="56"/>
        <end position="57"/>
    </location>
</feature>
<organism>
    <name type="scientific">Vaccinia virus (strain Copenhagen)</name>
    <name type="common">VACV</name>
    <dbReference type="NCBI Taxonomy" id="10249"/>
    <lineage>
        <taxon>Viruses</taxon>
        <taxon>Varidnaviria</taxon>
        <taxon>Bamfordvirae</taxon>
        <taxon>Nucleocytoviricota</taxon>
        <taxon>Pokkesviricetes</taxon>
        <taxon>Chitovirales</taxon>
        <taxon>Poxviridae</taxon>
        <taxon>Chordopoxvirinae</taxon>
        <taxon>Orthopoxvirus</taxon>
        <taxon>Vaccinia virus</taxon>
    </lineage>
</organism>
<organismHost>
    <name type="scientific">Homo sapiens</name>
    <name type="common">Human</name>
    <dbReference type="NCBI Taxonomy" id="9606"/>
</organismHost>
<reference key="1">
    <citation type="journal article" date="1990" name="Virology">
        <title>The complete DNA sequence of vaccinia virus.</title>
        <authorList>
            <person name="Goebel S.J."/>
            <person name="Johnson G.P."/>
            <person name="Perkus M.E."/>
            <person name="Davis S.W."/>
            <person name="Winslow J.P."/>
            <person name="Paoletti E."/>
        </authorList>
    </citation>
    <scope>NUCLEOTIDE SEQUENCE [LARGE SCALE GENOMIC DNA]</scope>
</reference>
<reference key="2">
    <citation type="journal article" date="1990" name="Virology">
        <title>Appendix to 'The complete DNA sequence of vaccinia virus'.</title>
        <authorList>
            <person name="Goebel S.J."/>
            <person name="Johnson G.P."/>
            <person name="Perkus M.E."/>
            <person name="Davis S.W."/>
            <person name="Winslow J.P."/>
            <person name="Paoletti E."/>
        </authorList>
    </citation>
    <scope>NUCLEOTIDE SEQUENCE [LARGE SCALE GENOMIC DNA]</scope>
</reference>
<sequence>MADKKNLAVRSSYDDYIETVNKITPQLKNLLAQIGGDAAVKGGNNNLNSQTDVTAGACDTKSKSSKCITCKPKSKSSSSSTSTSKGSKNTSGAPRRRTTVTTTSYNAMDGQIVQAVTNAGKIVYGTVRDGQLEVRGMVGEINHDLLGIDSVNAGKKKPSKKMPTNKKINMSSGMRRQEQINPDDCCLDMGMY</sequence>
<keyword id="KW-0426">Late protein</keyword>
<keyword id="KW-1185">Reference proteome</keyword>
<keyword id="KW-0946">Virion</keyword>
<gene>
    <name type="primary">OPG138</name>
    <name type="ORF">A12L</name>
</gene>
<dbReference type="EMBL" id="M35027">
    <property type="protein sequence ID" value="AAA48134.1"/>
    <property type="molecule type" value="Genomic_DNA"/>
</dbReference>
<dbReference type="PIR" id="E42518">
    <property type="entry name" value="E42518"/>
</dbReference>
<dbReference type="SMR" id="P20989"/>
<dbReference type="DIP" id="DIP-2185N"/>
<dbReference type="IntAct" id="P20989">
    <property type="interactions" value="1"/>
</dbReference>
<dbReference type="MINT" id="P20989"/>
<dbReference type="Proteomes" id="UP000008269">
    <property type="component" value="Segment"/>
</dbReference>
<dbReference type="GO" id="GO:0044423">
    <property type="term" value="C:virion component"/>
    <property type="evidence" value="ECO:0007669"/>
    <property type="project" value="UniProtKB-KW"/>
</dbReference>
<dbReference type="InterPro" id="IPR006744">
    <property type="entry name" value="Poxvirus_A12"/>
</dbReference>
<dbReference type="Pfam" id="PF04651">
    <property type="entry name" value="Pox_A12"/>
    <property type="match status" value="1"/>
</dbReference>
<comment type="function">
    <text evidence="1">Component of the virion core that undergoes proteolytic processing during the immature virion (IV) to mature virion (MV) transition. Essential for the formation of a structurally normal core.</text>
</comment>
<comment type="subcellular location">
    <molecule>25 kDa core protein OPG138</molecule>
    <subcellularLocation>
        <location evidence="1">Virion</location>
    </subcellularLocation>
    <text evidence="1">Localizes to the virion core.</text>
</comment>
<comment type="subcellular location">
    <molecule>17 kDa core protein OPG138</molecule>
    <subcellularLocation>
        <location evidence="1">Virion</location>
    </subcellularLocation>
    <text evidence="1">Localizes to the virion core.</text>
</comment>
<comment type="induction">
    <text>Expressed in the late phase of the viral replicative cycle.</text>
</comment>
<comment type="PTM">
    <text evidence="1">The 25-kDa precursor is cleaved to a mature protein of 17 kDa during virion maturation. Further proteolytic processing is supposed to occur since five more OPG138-derived products have been observed.</text>
</comment>
<comment type="similarity">
    <text evidence="3">Belongs to the orthopoxvirus OPG138 family.</text>
</comment>
<accession>P20989</accession>
<evidence type="ECO:0000250" key="1">
    <source>
        <dbReference type="UniProtKB" id="Q80HV7"/>
    </source>
</evidence>
<evidence type="ECO:0000256" key="2">
    <source>
        <dbReference type="SAM" id="MobiDB-lite"/>
    </source>
</evidence>
<evidence type="ECO:0000305" key="3"/>
<protein>
    <recommendedName>
        <fullName>25 kDa core protein OPG138</fullName>
    </recommendedName>
    <component>
        <recommendedName>
            <fullName>17 kDa core protein OPG138</fullName>
            <shortName>17K</shortName>
        </recommendedName>
    </component>
</protein>
<name>PG138_VACCC</name>